<organism>
    <name type="scientific">Macaca mulatta</name>
    <name type="common">Rhesus macaque</name>
    <dbReference type="NCBI Taxonomy" id="9544"/>
    <lineage>
        <taxon>Eukaryota</taxon>
        <taxon>Metazoa</taxon>
        <taxon>Chordata</taxon>
        <taxon>Craniata</taxon>
        <taxon>Vertebrata</taxon>
        <taxon>Euteleostomi</taxon>
        <taxon>Mammalia</taxon>
        <taxon>Eutheria</taxon>
        <taxon>Euarchontoglires</taxon>
        <taxon>Primates</taxon>
        <taxon>Haplorrhini</taxon>
        <taxon>Catarrhini</taxon>
        <taxon>Cercopithecidae</taxon>
        <taxon>Cercopithecinae</taxon>
        <taxon>Macaca</taxon>
    </lineage>
</organism>
<sequence>MDLEASLLPTGPNTSNTSDGPDNLTSAGSPPRSGSVSYINIIMPSVFGTICLLGIIGNSMVIFAVVKKSKLHWCNNVPDIFIINLSVVDLLFLLGMPFMIHQLMGNGVWHFGETMCTLITAMDANSQFTSTYILTAMAIDRYLATVHPISSTKFRKPSVATLVICLLWALSFISITPVWLYARLIPFPGGAVGCGIRLPNPDTDLYWFTLYQFFLAFALPFVVITAAYVRILQRMTSSVAPASQRSIRLRTKRVTRTAIAICLVFFVCWAPYYVLQLTQLSISRPTLTFVYLYNAAISLGYANSCLNPFVYIVLCETFRKRLVLSVKPAAQGQLRAVSNAQTADEERTESKGT</sequence>
<proteinExistence type="evidence at transcript level"/>
<protein>
    <recommendedName>
        <fullName evidence="1">Melanin-concentrating hormone receptor 1</fullName>
        <shortName>MCH receptor 1</shortName>
        <shortName>MCH-R1</shortName>
        <shortName>MCHR-1</shortName>
    </recommendedName>
    <alternativeName>
        <fullName>G-protein coupled receptor 24</fullName>
    </alternativeName>
    <alternativeName>
        <fullName>MCH-1R</fullName>
        <shortName>MCH1R</shortName>
        <shortName>MCHR</shortName>
    </alternativeName>
</protein>
<keyword id="KW-1003">Cell membrane</keyword>
<keyword id="KW-1015">Disulfide bond</keyword>
<keyword id="KW-0297">G-protein coupled receptor</keyword>
<keyword id="KW-0325">Glycoprotein</keyword>
<keyword id="KW-0472">Membrane</keyword>
<keyword id="KW-0675">Receptor</keyword>
<keyword id="KW-1185">Reference proteome</keyword>
<keyword id="KW-0807">Transducer</keyword>
<keyword id="KW-0812">Transmembrane</keyword>
<keyword id="KW-1133">Transmembrane helix</keyword>
<reference key="1">
    <citation type="journal article" date="2002" name="Genomics">
        <title>Melanin-concentrating hormone receptor subtypes 1 and 2: species-specific gene expression.</title>
        <authorList>
            <person name="Tan C.P."/>
            <person name="Sano H."/>
            <person name="Iwaasa H."/>
            <person name="Pan J."/>
            <person name="Sailer A.W."/>
            <person name="Hreniuk D.L."/>
            <person name="Feighner S.D."/>
            <person name="Palyha O.C."/>
            <person name="Pong S.S."/>
            <person name="Figueroa D.J."/>
            <person name="Austin C.P."/>
            <person name="Jiang M.M."/>
            <person name="Yu H."/>
            <person name="Ito J."/>
            <person name="Ito M."/>
            <person name="Ito M."/>
            <person name="Guan X.M."/>
            <person name="MacNeil D.J."/>
            <person name="Kanatani A."/>
            <person name="Van der Ploeg L.H.T."/>
            <person name="Howard A.D."/>
        </authorList>
    </citation>
    <scope>NUCLEOTIDE SEQUENCE [MRNA]</scope>
</reference>
<reference key="2">
    <citation type="journal article" date="2002" name="Peptides">
        <title>Cloning and characterization of rhesus monkey MCH-R1 and MCH-R2.</title>
        <authorList>
            <person name="Fried S."/>
            <person name="O'Neill K."/>
            <person name="Hawes B.E."/>
        </authorList>
    </citation>
    <scope>NUCLEOTIDE SEQUENCE [MRNA]</scope>
</reference>
<evidence type="ECO:0000250" key="1">
    <source>
        <dbReference type="UniProtKB" id="Q99705"/>
    </source>
</evidence>
<evidence type="ECO:0000255" key="2"/>
<evidence type="ECO:0000255" key="3">
    <source>
        <dbReference type="PROSITE-ProRule" id="PRU00521"/>
    </source>
</evidence>
<evidence type="ECO:0000256" key="4">
    <source>
        <dbReference type="SAM" id="MobiDB-lite"/>
    </source>
</evidence>
<accession>Q8MJ89</accession>
<comment type="function">
    <text evidence="1">Receptor for melanin-concentrating hormone, coupled to both G proteins that inhibit adenylyl cyclase and G proteins that activate phosphoinositide hydrolysis.</text>
</comment>
<comment type="subunit">
    <text evidence="1">Interacts with NCDN.</text>
</comment>
<comment type="subcellular location">
    <subcellularLocation>
        <location evidence="1">Cell membrane</location>
        <topology evidence="2">Multi-pass membrane protein</topology>
    </subcellularLocation>
</comment>
<comment type="similarity">
    <text evidence="3">Belongs to the G-protein coupled receptor 1 family.</text>
</comment>
<name>MCHR1_MACMU</name>
<dbReference type="EMBL" id="AF513988">
    <property type="protein sequence ID" value="AAM49793.1"/>
    <property type="molecule type" value="mRNA"/>
</dbReference>
<dbReference type="EMBL" id="AY078245">
    <property type="protein sequence ID" value="AAL80003.1"/>
    <property type="molecule type" value="mRNA"/>
</dbReference>
<dbReference type="RefSeq" id="NP_001028057.1">
    <property type="nucleotide sequence ID" value="NM_001032885.1"/>
</dbReference>
<dbReference type="SMR" id="Q8MJ89"/>
<dbReference type="STRING" id="9544.ENSMMUP00000022864"/>
<dbReference type="BindingDB" id="Q8MJ89"/>
<dbReference type="ChEMBL" id="CHEMBL2029193"/>
<dbReference type="GlyCosmos" id="Q8MJ89">
    <property type="glycosylation" value="3 sites, No reported glycans"/>
</dbReference>
<dbReference type="PaxDb" id="9544-ENSMMUP00000022864"/>
<dbReference type="GeneID" id="574232"/>
<dbReference type="KEGG" id="mcc:574232"/>
<dbReference type="CTD" id="2847"/>
<dbReference type="eggNOG" id="KOG3656">
    <property type="taxonomic scope" value="Eukaryota"/>
</dbReference>
<dbReference type="InParanoid" id="Q8MJ89"/>
<dbReference type="OrthoDB" id="6076970at2759"/>
<dbReference type="Proteomes" id="UP000006718">
    <property type="component" value="Unassembled WGS sequence"/>
</dbReference>
<dbReference type="GO" id="GO:0043005">
    <property type="term" value="C:neuron projection"/>
    <property type="evidence" value="ECO:0000318"/>
    <property type="project" value="GO_Central"/>
</dbReference>
<dbReference type="GO" id="GO:0005886">
    <property type="term" value="C:plasma membrane"/>
    <property type="evidence" value="ECO:0000318"/>
    <property type="project" value="GO_Central"/>
</dbReference>
<dbReference type="GO" id="GO:0004930">
    <property type="term" value="F:G protein-coupled receptor activity"/>
    <property type="evidence" value="ECO:0000318"/>
    <property type="project" value="GO_Central"/>
</dbReference>
<dbReference type="GO" id="GO:0030273">
    <property type="term" value="F:melanin-concentrating hormone receptor activity"/>
    <property type="evidence" value="ECO:0007669"/>
    <property type="project" value="InterPro"/>
</dbReference>
<dbReference type="GO" id="GO:0042923">
    <property type="term" value="F:neuropeptide binding"/>
    <property type="evidence" value="ECO:0000318"/>
    <property type="project" value="GO_Central"/>
</dbReference>
<dbReference type="GO" id="GO:0007218">
    <property type="term" value="P:neuropeptide signaling pathway"/>
    <property type="evidence" value="ECO:0000318"/>
    <property type="project" value="GO_Central"/>
</dbReference>
<dbReference type="CDD" id="cd15338">
    <property type="entry name" value="7tmA_MCHR1"/>
    <property type="match status" value="1"/>
</dbReference>
<dbReference type="FunFam" id="1.20.1070.10:FF:000115">
    <property type="entry name" value="Melanin-concentrating hormone receptor 1"/>
    <property type="match status" value="1"/>
</dbReference>
<dbReference type="Gene3D" id="1.20.1070.10">
    <property type="entry name" value="Rhodopsin 7-helix transmembrane proteins"/>
    <property type="match status" value="1"/>
</dbReference>
<dbReference type="InterPro" id="IPR000276">
    <property type="entry name" value="GPCR_Rhodpsn"/>
</dbReference>
<dbReference type="InterPro" id="IPR017452">
    <property type="entry name" value="GPCR_Rhodpsn_7TM"/>
</dbReference>
<dbReference type="InterPro" id="IPR008361">
    <property type="entry name" value="MCH_rcpt"/>
</dbReference>
<dbReference type="InterPro" id="IPR004047">
    <property type="entry name" value="MCHR1"/>
</dbReference>
<dbReference type="PANTHER" id="PTHR24229:SF91">
    <property type="entry name" value="MELANIN-CONCENTRATING HORMONE RECEPTOR 1"/>
    <property type="match status" value="1"/>
</dbReference>
<dbReference type="PANTHER" id="PTHR24229">
    <property type="entry name" value="NEUROPEPTIDES RECEPTOR"/>
    <property type="match status" value="1"/>
</dbReference>
<dbReference type="Pfam" id="PF00001">
    <property type="entry name" value="7tm_1"/>
    <property type="match status" value="1"/>
</dbReference>
<dbReference type="PRINTS" id="PR00237">
    <property type="entry name" value="GPCRRHODOPSN"/>
</dbReference>
<dbReference type="PRINTS" id="PR01507">
    <property type="entry name" value="MCH1RECEPTOR"/>
</dbReference>
<dbReference type="PRINTS" id="PR01783">
    <property type="entry name" value="MCHRECEPTOR"/>
</dbReference>
<dbReference type="SUPFAM" id="SSF81321">
    <property type="entry name" value="Family A G protein-coupled receptor-like"/>
    <property type="match status" value="1"/>
</dbReference>
<dbReference type="PROSITE" id="PS50262">
    <property type="entry name" value="G_PROTEIN_RECEP_F1_2"/>
    <property type="match status" value="1"/>
</dbReference>
<feature type="chain" id="PRO_0000069735" description="Melanin-concentrating hormone receptor 1">
    <location>
        <begin position="1"/>
        <end position="353"/>
    </location>
</feature>
<feature type="topological domain" description="Extracellular" evidence="2">
    <location>
        <begin position="1"/>
        <end position="45"/>
    </location>
</feature>
<feature type="transmembrane region" description="Helical; Name=1" evidence="2">
    <location>
        <begin position="46"/>
        <end position="66"/>
    </location>
</feature>
<feature type="topological domain" description="Cytoplasmic" evidence="2">
    <location>
        <begin position="67"/>
        <end position="79"/>
    </location>
</feature>
<feature type="transmembrane region" description="Helical; Name=2" evidence="2">
    <location>
        <begin position="80"/>
        <end position="100"/>
    </location>
</feature>
<feature type="topological domain" description="Extracellular" evidence="2">
    <location>
        <begin position="101"/>
        <end position="118"/>
    </location>
</feature>
<feature type="transmembrane region" description="Helical; Name=3" evidence="2">
    <location>
        <begin position="119"/>
        <end position="139"/>
    </location>
</feature>
<feature type="topological domain" description="Cytoplasmic" evidence="2">
    <location>
        <begin position="140"/>
        <end position="161"/>
    </location>
</feature>
<feature type="transmembrane region" description="Helical; Name=4" evidence="2">
    <location>
        <begin position="162"/>
        <end position="182"/>
    </location>
</feature>
<feature type="topological domain" description="Extracellular" evidence="2">
    <location>
        <begin position="183"/>
        <end position="204"/>
    </location>
</feature>
<feature type="transmembrane region" description="Helical; Name=5" evidence="2">
    <location>
        <begin position="205"/>
        <end position="225"/>
    </location>
</feature>
<feature type="topological domain" description="Cytoplasmic" evidence="2">
    <location>
        <begin position="226"/>
        <end position="257"/>
    </location>
</feature>
<feature type="transmembrane region" description="Helical; Name=6" evidence="2">
    <location>
        <begin position="258"/>
        <end position="278"/>
    </location>
</feature>
<feature type="topological domain" description="Extracellular" evidence="2">
    <location>
        <begin position="279"/>
        <end position="294"/>
    </location>
</feature>
<feature type="transmembrane region" description="Helical; Name=7" evidence="2">
    <location>
        <begin position="295"/>
        <end position="315"/>
    </location>
</feature>
<feature type="topological domain" description="Cytoplasmic" evidence="2">
    <location>
        <begin position="316"/>
        <end position="353"/>
    </location>
</feature>
<feature type="region of interest" description="Disordered" evidence="4">
    <location>
        <begin position="1"/>
        <end position="31"/>
    </location>
</feature>
<feature type="compositionally biased region" description="Polar residues" evidence="4">
    <location>
        <begin position="11"/>
        <end position="31"/>
    </location>
</feature>
<feature type="glycosylation site" description="N-linked (GlcNAc...) asparagine" evidence="2">
    <location>
        <position position="13"/>
    </location>
</feature>
<feature type="glycosylation site" description="N-linked (GlcNAc...) asparagine" evidence="2">
    <location>
        <position position="16"/>
    </location>
</feature>
<feature type="glycosylation site" description="N-linked (GlcNAc...) asparagine" evidence="2">
    <location>
        <position position="23"/>
    </location>
</feature>
<feature type="disulfide bond" evidence="3">
    <location>
        <begin position="116"/>
        <end position="194"/>
    </location>
</feature>
<gene>
    <name evidence="1" type="primary">MCHR1</name>
    <name type="synonym">GPR24</name>
</gene>